<dbReference type="EMBL" id="L76155">
    <property type="protein sequence ID" value="AAA88316.1"/>
    <property type="molecule type" value="mRNA"/>
</dbReference>
<dbReference type="EMBL" id="AF109719">
    <property type="protein sequence ID" value="AAC82476.1"/>
    <property type="molecule type" value="Genomic_DNA"/>
</dbReference>
<dbReference type="EMBL" id="BC120637">
    <property type="protein sequence ID" value="AAI20638.1"/>
    <property type="molecule type" value="mRNA"/>
</dbReference>
<dbReference type="EMBL" id="BC120639">
    <property type="protein sequence ID" value="AAI20640.1"/>
    <property type="molecule type" value="mRNA"/>
</dbReference>
<dbReference type="CCDS" id="CCDS28685.1"/>
<dbReference type="RefSeq" id="NP_001122069.1">
    <property type="nucleotide sequence ID" value="NM_001128597.1"/>
</dbReference>
<dbReference type="RefSeq" id="NP_115849.2">
    <property type="nucleotide sequence ID" value="NM_032460.2"/>
</dbReference>
<dbReference type="RefSeq" id="XP_030106017.1">
    <property type="nucleotide sequence ID" value="XM_030250157.1"/>
</dbReference>
<dbReference type="SMR" id="Q61858"/>
<dbReference type="FunCoup" id="Q61858">
    <property type="interactions" value="111"/>
</dbReference>
<dbReference type="IntAct" id="Q61858">
    <property type="interactions" value="1"/>
</dbReference>
<dbReference type="MINT" id="Q61858"/>
<dbReference type="STRING" id="10090.ENSMUSP00000056646"/>
<dbReference type="PhosphoSitePlus" id="Q61858"/>
<dbReference type="PaxDb" id="10090-ENSMUSP00000056646"/>
<dbReference type="ProteomicsDB" id="271427"/>
<dbReference type="Antibodypedia" id="27457">
    <property type="antibodies" value="64 antibodies from 21 providers"/>
</dbReference>
<dbReference type="DNASU" id="81845"/>
<dbReference type="Ensembl" id="ENSMUST00000052167.9">
    <property type="protein sequence ID" value="ENSMUSP00000056646.9"/>
    <property type="gene ID" value="ENSMUSG00000092417.4"/>
</dbReference>
<dbReference type="GeneID" id="81845"/>
<dbReference type="KEGG" id="mmu:81845"/>
<dbReference type="UCSC" id="uc008cfw.1">
    <property type="organism name" value="mouse"/>
</dbReference>
<dbReference type="AGR" id="MGI:2148975"/>
<dbReference type="CTD" id="7918"/>
<dbReference type="MGI" id="MGI:2148975">
    <property type="gene designation" value="Gpank1"/>
</dbReference>
<dbReference type="VEuPathDB" id="HostDB:ENSMUSG00000092417"/>
<dbReference type="eggNOG" id="KOG2384">
    <property type="taxonomic scope" value="Eukaryota"/>
</dbReference>
<dbReference type="GeneTree" id="ENSGT00390000003292"/>
<dbReference type="InParanoid" id="Q61858"/>
<dbReference type="OMA" id="QGWDQEH"/>
<dbReference type="OrthoDB" id="4735278at2759"/>
<dbReference type="PhylomeDB" id="Q61858"/>
<dbReference type="TreeFam" id="TF315384"/>
<dbReference type="BioGRID-ORCS" id="81845">
    <property type="hits" value="4 hits in 76 CRISPR screens"/>
</dbReference>
<dbReference type="ChiTaRS" id="Gpank1">
    <property type="organism name" value="mouse"/>
</dbReference>
<dbReference type="PRO" id="PR:Q61858"/>
<dbReference type="Proteomes" id="UP000000589">
    <property type="component" value="Chromosome 17"/>
</dbReference>
<dbReference type="RNAct" id="Q61858">
    <property type="molecule type" value="protein"/>
</dbReference>
<dbReference type="Bgee" id="ENSMUSG00000092417">
    <property type="expression patterns" value="Expressed in epithelium of small intestine and 109 other cell types or tissues"/>
</dbReference>
<dbReference type="ExpressionAtlas" id="Q61858">
    <property type="expression patterns" value="baseline and differential"/>
</dbReference>
<dbReference type="GO" id="GO:0003676">
    <property type="term" value="F:nucleic acid binding"/>
    <property type="evidence" value="ECO:0007669"/>
    <property type="project" value="InterPro"/>
</dbReference>
<dbReference type="Gene3D" id="1.25.40.20">
    <property type="entry name" value="Ankyrin repeat-containing domain"/>
    <property type="match status" value="1"/>
</dbReference>
<dbReference type="InterPro" id="IPR002110">
    <property type="entry name" value="Ankyrin_rpt"/>
</dbReference>
<dbReference type="InterPro" id="IPR036770">
    <property type="entry name" value="Ankyrin_rpt-contain_sf"/>
</dbReference>
<dbReference type="InterPro" id="IPR000467">
    <property type="entry name" value="G_patch_dom"/>
</dbReference>
<dbReference type="InterPro" id="IPR039146">
    <property type="entry name" value="GPANK1"/>
</dbReference>
<dbReference type="PANTHER" id="PTHR20923">
    <property type="entry name" value="BAT4 PROTEIN-RELATED"/>
    <property type="match status" value="1"/>
</dbReference>
<dbReference type="PANTHER" id="PTHR20923:SF1">
    <property type="entry name" value="G PATCH DOMAIN AND ANKYRIN REPEAT-CONTAINING PROTEIN 1"/>
    <property type="match status" value="1"/>
</dbReference>
<dbReference type="Pfam" id="PF12796">
    <property type="entry name" value="Ank_2"/>
    <property type="match status" value="1"/>
</dbReference>
<dbReference type="Pfam" id="PF01585">
    <property type="entry name" value="G-patch"/>
    <property type="match status" value="1"/>
</dbReference>
<dbReference type="SMART" id="SM00443">
    <property type="entry name" value="G_patch"/>
    <property type="match status" value="1"/>
</dbReference>
<dbReference type="SUPFAM" id="SSF48403">
    <property type="entry name" value="Ankyrin repeat"/>
    <property type="match status" value="1"/>
</dbReference>
<dbReference type="PROSITE" id="PS50297">
    <property type="entry name" value="ANK_REP_REGION"/>
    <property type="match status" value="1"/>
</dbReference>
<dbReference type="PROSITE" id="PS50174">
    <property type="entry name" value="G_PATCH"/>
    <property type="match status" value="1"/>
</dbReference>
<feature type="chain" id="PRO_0000066973" description="G patch domain and ankyrin repeat-containing protein 1">
    <location>
        <begin position="1"/>
        <end position="372"/>
    </location>
</feature>
<feature type="repeat" description="ANK 1">
    <location>
        <begin position="124"/>
        <end position="155"/>
    </location>
</feature>
<feature type="repeat" description="ANK 2">
    <location>
        <begin position="156"/>
        <end position="186"/>
    </location>
</feature>
<feature type="domain" description="G-patch" evidence="2">
    <location>
        <begin position="271"/>
        <end position="317"/>
    </location>
</feature>
<feature type="region of interest" description="Disordered" evidence="3">
    <location>
        <begin position="74"/>
        <end position="110"/>
    </location>
</feature>
<feature type="region of interest" description="Disordered" evidence="3">
    <location>
        <begin position="211"/>
        <end position="233"/>
    </location>
</feature>
<feature type="region of interest" description="Disordered" evidence="3">
    <location>
        <begin position="251"/>
        <end position="271"/>
    </location>
</feature>
<feature type="region of interest" description="Disordered" evidence="3">
    <location>
        <begin position="330"/>
        <end position="357"/>
    </location>
</feature>
<feature type="compositionally biased region" description="Polar residues" evidence="3">
    <location>
        <begin position="220"/>
        <end position="233"/>
    </location>
</feature>
<feature type="compositionally biased region" description="Basic and acidic residues" evidence="3">
    <location>
        <begin position="330"/>
        <end position="340"/>
    </location>
</feature>
<feature type="compositionally biased region" description="Basic and acidic residues" evidence="3">
    <location>
        <begin position="348"/>
        <end position="357"/>
    </location>
</feature>
<feature type="cross-link" description="Glycyl lysine isopeptide (Lys-Gly) (interchain with G-Cter in SUMO2)" evidence="1">
    <location>
        <position position="306"/>
    </location>
</feature>
<feature type="sequence conflict" description="In Ref. 1; AAA88316." evidence="4" ref="1">
    <original>A</original>
    <variation>T</variation>
    <location>
        <position position="182"/>
    </location>
</feature>
<protein>
    <recommendedName>
        <fullName>G patch domain and ankyrin repeat-containing protein 1</fullName>
    </recommendedName>
    <alternativeName>
        <fullName>G5 protein</fullName>
    </alternativeName>
    <alternativeName>
        <fullName>HLA-B-associated transcript 4</fullName>
    </alternativeName>
</protein>
<sequence length="372" mass="41011">MVGSLACHILALPSLHFLVSLTGMSRPSFIEFTPAADSSDLWKDGQQQPQQEKAEPVLDGAAARAFYEALIADDSSSSKPQRAEPMRERKKKRRRVTREPAAAGVPRQGRALEDEDRMAQWILLAAQNGDLTELRRLLEPQEAGGAGGNINARDAFWWTPLMCAARAGQGAAVRYLLGRGAAWVGVCDLGGRDAAQLAEEAGFPEVARMVRESHGETRSPENQNRSTPSSSQFCEDCGAHFEDSNHHTSTAHLLSLSRRPQPSNLPLGVPTSSPGFRLLLRGGWEPGMGLGPRGEGRANPIPTILKRDQEGLGYRSPPQPRVTHFAARDTRAVSGRERVPRVATLSQRENRRQEEKGRAWERDLRLYMNLEF</sequence>
<accession>Q61858</accession>
<accession>Q0VBG8</accession>
<accession>Q9R065</accession>
<reference key="1">
    <citation type="journal article" date="1997" name="Mamm. Genome">
        <title>Localization of the casein kinase II beta-subunit gene within the mouse H-2 complex class III region and comparison of expression with Bat genes.</title>
        <authorList>
            <person name="Lanning D."/>
            <person name="Lafuse W.P."/>
        </authorList>
    </citation>
    <scope>NUCLEOTIDE SEQUENCE [MRNA]</scope>
    <source>
        <strain>C57BL/6N</strain>
    </source>
</reference>
<reference key="2">
    <citation type="journal article" date="2003" name="Genome Res.">
        <title>Analysis of the gene-dense major histocompatibility complex class III region and its comparison to mouse.</title>
        <authorList>
            <person name="Xie T."/>
            <person name="Rowen L."/>
            <person name="Aguado B."/>
            <person name="Ahearn M.E."/>
            <person name="Madan A."/>
            <person name="Qin S."/>
            <person name="Campbell R.D."/>
            <person name="Hood L."/>
        </authorList>
    </citation>
    <scope>NUCLEOTIDE SEQUENCE [LARGE SCALE GENOMIC DNA]</scope>
    <source>
        <strain>129</strain>
    </source>
</reference>
<reference key="3">
    <citation type="journal article" date="2004" name="Genome Res.">
        <title>The status, quality, and expansion of the NIH full-length cDNA project: the Mammalian Gene Collection (MGC).</title>
        <authorList>
            <consortium name="The MGC Project Team"/>
        </authorList>
    </citation>
    <scope>NUCLEOTIDE SEQUENCE [LARGE SCALE MRNA]</scope>
    <source>
        <tissue>Brain</tissue>
    </source>
</reference>
<organism>
    <name type="scientific">Mus musculus</name>
    <name type="common">Mouse</name>
    <dbReference type="NCBI Taxonomy" id="10090"/>
    <lineage>
        <taxon>Eukaryota</taxon>
        <taxon>Metazoa</taxon>
        <taxon>Chordata</taxon>
        <taxon>Craniata</taxon>
        <taxon>Vertebrata</taxon>
        <taxon>Euteleostomi</taxon>
        <taxon>Mammalia</taxon>
        <taxon>Eutheria</taxon>
        <taxon>Euarchontoglires</taxon>
        <taxon>Glires</taxon>
        <taxon>Rodentia</taxon>
        <taxon>Myomorpha</taxon>
        <taxon>Muroidea</taxon>
        <taxon>Muridae</taxon>
        <taxon>Murinae</taxon>
        <taxon>Mus</taxon>
        <taxon>Mus</taxon>
    </lineage>
</organism>
<gene>
    <name type="primary">Gpank1</name>
    <name type="synonym">Bat-4</name>
    <name type="synonym">Bat4</name>
    <name type="synonym">G5</name>
</gene>
<name>GPAN1_MOUSE</name>
<evidence type="ECO:0000250" key="1">
    <source>
        <dbReference type="UniProtKB" id="O95872"/>
    </source>
</evidence>
<evidence type="ECO:0000255" key="2">
    <source>
        <dbReference type="PROSITE-ProRule" id="PRU00092"/>
    </source>
</evidence>
<evidence type="ECO:0000256" key="3">
    <source>
        <dbReference type="SAM" id="MobiDB-lite"/>
    </source>
</evidence>
<evidence type="ECO:0000305" key="4"/>
<proteinExistence type="evidence at transcript level"/>
<keyword id="KW-0040">ANK repeat</keyword>
<keyword id="KW-1017">Isopeptide bond</keyword>
<keyword id="KW-1185">Reference proteome</keyword>
<keyword id="KW-0677">Repeat</keyword>
<keyword id="KW-0832">Ubl conjugation</keyword>